<keyword id="KW-0002">3D-structure</keyword>
<keyword id="KW-0007">Acetylation</keyword>
<keyword id="KW-0037">Angiogenesis</keyword>
<keyword id="KW-0067">ATP-binding</keyword>
<keyword id="KW-1003">Cell membrane</keyword>
<keyword id="KW-0963">Cytoplasm</keyword>
<keyword id="KW-0903">Direct protein sequencing</keyword>
<keyword id="KW-0256">Endoplasmic reticulum</keyword>
<keyword id="KW-0436">Ligase</keyword>
<keyword id="KW-0449">Lipoprotein</keyword>
<keyword id="KW-0460">Magnesium</keyword>
<keyword id="KW-0464">Manganese</keyword>
<keyword id="KW-0472">Membrane</keyword>
<keyword id="KW-0479">Metal-binding</keyword>
<keyword id="KW-0492">Microsome</keyword>
<keyword id="KW-0496">Mitochondrion</keyword>
<keyword id="KW-0547">Nucleotide-binding</keyword>
<keyword id="KW-0564">Palmitate</keyword>
<keyword id="KW-0597">Phosphoprotein</keyword>
<keyword id="KW-1185">Reference proteome</keyword>
<keyword id="KW-0808">Transferase</keyword>
<keyword id="KW-0832">Ubl conjugation</keyword>
<proteinExistence type="evidence at protein level"/>
<sequence length="373" mass="42268">MATSASSHLNKGIKQMYMNLPQGEKIQLMYIWVDGTGEGLRCKTRTLDCDPKCVEELPEWNFDGSSTFQSEGSNSDMYLHPVAMFRDPFRRDPNKLVFCEVFKYNRKPAETNLRHSCKRIMDMVSSQHPWFGMEQEYTLMGTDGHPFGWPSNGFPGPQGPYYCGVGADKAYGRDIVEAHYRACLYAGIKITGTNAEVMPAQWEFQIGPCEGIRMGDHLWVARFILHRVCEDFGVIATFDPKPIPGNWNGAGCHTNFSTKAMREENGLRCIEEAIDKLSKRHQYHIRAYDPKGGLDNARRLTGFHETSNINDFSAGVANRSASIRIPRIVGQEKKGYFEDRRPSANCDPYAVTEAIVRTCLLNETGDEPFQYKN</sequence>
<feature type="initiator methionine" description="Removed" evidence="2">
    <location>
        <position position="1"/>
    </location>
</feature>
<feature type="chain" id="PRO_0000153143" description="Glutamine synthetase">
    <location>
        <begin position="2"/>
        <end position="373"/>
    </location>
</feature>
<feature type="domain" description="GS beta-grasp" evidence="4">
    <location>
        <begin position="24"/>
        <end position="106"/>
    </location>
</feature>
<feature type="domain" description="GS catalytic" evidence="5">
    <location>
        <begin position="113"/>
        <end position="373"/>
    </location>
</feature>
<feature type="region of interest" description="Required for glutamine-induced ubiquitination by CRL4(CRBN) and proteasomal degradation" evidence="1">
    <location>
        <begin position="2"/>
        <end position="25"/>
    </location>
</feature>
<feature type="binding site" evidence="1">
    <location>
        <position position="134"/>
    </location>
    <ligand>
        <name>ATP</name>
        <dbReference type="ChEBI" id="CHEBI:30616"/>
    </ligand>
</feature>
<feature type="binding site" evidence="1">
    <location>
        <position position="134"/>
    </location>
    <ligand>
        <name>Mn(2+)</name>
        <dbReference type="ChEBI" id="CHEBI:29035"/>
        <label>1</label>
    </ligand>
</feature>
<feature type="binding site" evidence="1">
    <location>
        <position position="136"/>
    </location>
    <ligand>
        <name>Mn(2+)</name>
        <dbReference type="ChEBI" id="CHEBI:29035"/>
        <label>2</label>
    </ligand>
</feature>
<feature type="binding site" evidence="1">
    <location>
        <position position="196"/>
    </location>
    <ligand>
        <name>Mn(2+)</name>
        <dbReference type="ChEBI" id="CHEBI:29035"/>
        <label>2</label>
    </ligand>
</feature>
<feature type="binding site" evidence="1">
    <location>
        <begin position="203"/>
        <end position="208"/>
    </location>
    <ligand>
        <name>ATP</name>
        <dbReference type="ChEBI" id="CHEBI:30616"/>
    </ligand>
</feature>
<feature type="binding site" evidence="1">
    <location>
        <position position="203"/>
    </location>
    <ligand>
        <name>Mn(2+)</name>
        <dbReference type="ChEBI" id="CHEBI:29035"/>
        <label>2</label>
    </ligand>
</feature>
<feature type="binding site" evidence="3">
    <location>
        <begin position="246"/>
        <end position="247"/>
    </location>
    <ligand>
        <name>L-glutamate</name>
        <dbReference type="ChEBI" id="CHEBI:29985"/>
    </ligand>
</feature>
<feature type="binding site" evidence="1">
    <location>
        <position position="253"/>
    </location>
    <ligand>
        <name>Mn(2+)</name>
        <dbReference type="ChEBI" id="CHEBI:29035"/>
        <label>1</label>
    </ligand>
</feature>
<feature type="binding site" evidence="1">
    <location>
        <begin position="255"/>
        <end position="257"/>
    </location>
    <ligand>
        <name>ATP</name>
        <dbReference type="ChEBI" id="CHEBI:30616"/>
    </ligand>
</feature>
<feature type="binding site" evidence="1">
    <location>
        <position position="319"/>
    </location>
    <ligand>
        <name>ATP</name>
        <dbReference type="ChEBI" id="CHEBI:30616"/>
    </ligand>
</feature>
<feature type="binding site" evidence="3">
    <location>
        <position position="319"/>
    </location>
    <ligand>
        <name>L-glutamate</name>
        <dbReference type="ChEBI" id="CHEBI:29985"/>
    </ligand>
</feature>
<feature type="binding site" evidence="1">
    <location>
        <position position="324"/>
    </location>
    <ligand>
        <name>ATP</name>
        <dbReference type="ChEBI" id="CHEBI:30616"/>
    </ligand>
</feature>
<feature type="binding site" evidence="1">
    <location>
        <begin position="336"/>
        <end position="338"/>
    </location>
    <ligand>
        <name>ADP</name>
        <dbReference type="ChEBI" id="CHEBI:456216"/>
    </ligand>
</feature>
<feature type="binding site" evidence="1">
    <location>
        <position position="338"/>
    </location>
    <ligand>
        <name>Mn(2+)</name>
        <dbReference type="ChEBI" id="CHEBI:29035"/>
        <label>1</label>
    </ligand>
</feature>
<feature type="binding site" evidence="3">
    <location>
        <position position="340"/>
    </location>
    <ligand>
        <name>L-glutamate</name>
        <dbReference type="ChEBI" id="CHEBI:29985"/>
    </ligand>
</feature>
<feature type="modified residue" description="N-acetylalanine" evidence="2">
    <location>
        <position position="2"/>
    </location>
</feature>
<feature type="modified residue" description="N6-acetyllysine" evidence="1">
    <location>
        <position position="11"/>
    </location>
</feature>
<feature type="modified residue" description="N6-acetyllysine" evidence="1">
    <location>
        <position position="14"/>
    </location>
</feature>
<feature type="modified residue" description="Phosphotyrosine" evidence="2">
    <location>
        <position position="104"/>
    </location>
</feature>
<feature type="modified residue" description="Phosphoserine" evidence="1">
    <location>
        <position position="343"/>
    </location>
</feature>
<feature type="sequence conflict" description="In Ref. 4; AAH61559." evidence="12" ref="4">
    <original>N</original>
    <variation>D</variation>
    <location>
        <position position="74"/>
    </location>
</feature>
<feature type="sequence conflict" description="In Ref. 3; AAC42038." evidence="12" ref="3">
    <original>H</original>
    <variation>R</variation>
    <location>
        <position position="128"/>
    </location>
</feature>
<feature type="helix" evidence="15">
    <location>
        <begin position="5"/>
        <end position="8"/>
    </location>
</feature>
<feature type="helix" evidence="15">
    <location>
        <begin position="11"/>
        <end position="18"/>
    </location>
</feature>
<feature type="strand" evidence="15">
    <location>
        <begin position="26"/>
        <end position="33"/>
    </location>
</feature>
<feature type="strand" evidence="15">
    <location>
        <begin position="40"/>
        <end position="49"/>
    </location>
</feature>
<feature type="helix" evidence="15">
    <location>
        <begin position="54"/>
        <end position="56"/>
    </location>
</feature>
<feature type="strand" evidence="15">
    <location>
        <begin position="60"/>
        <end position="63"/>
    </location>
</feature>
<feature type="helix" evidence="15">
    <location>
        <begin position="64"/>
        <end position="67"/>
    </location>
</feature>
<feature type="strand" evidence="15">
    <location>
        <begin position="72"/>
        <end position="74"/>
    </location>
</feature>
<feature type="strand" evidence="15">
    <location>
        <begin position="76"/>
        <end position="86"/>
    </location>
</feature>
<feature type="turn" evidence="15">
    <location>
        <begin position="91"/>
        <end position="93"/>
    </location>
</feature>
<feature type="strand" evidence="15">
    <location>
        <begin position="94"/>
        <end position="102"/>
    </location>
</feature>
<feature type="helix" evidence="15">
    <location>
        <begin position="114"/>
        <end position="124"/>
    </location>
</feature>
<feature type="helix" evidence="15">
    <location>
        <begin position="125"/>
        <end position="127"/>
    </location>
</feature>
<feature type="strand" evidence="15">
    <location>
        <begin position="130"/>
        <end position="140"/>
    </location>
</feature>
<feature type="strand" evidence="15">
    <location>
        <begin position="144"/>
        <end position="146"/>
    </location>
</feature>
<feature type="strand" evidence="15">
    <location>
        <begin position="158"/>
        <end position="161"/>
    </location>
</feature>
<feature type="turn" evidence="15">
    <location>
        <begin position="167"/>
        <end position="169"/>
    </location>
</feature>
<feature type="helix" evidence="15">
    <location>
        <begin position="173"/>
        <end position="186"/>
    </location>
</feature>
<feature type="strand" evidence="15">
    <location>
        <begin position="190"/>
        <end position="195"/>
    </location>
</feature>
<feature type="strand" evidence="15">
    <location>
        <begin position="201"/>
        <end position="206"/>
    </location>
</feature>
<feature type="helix" evidence="15">
    <location>
        <begin position="212"/>
        <end position="232"/>
    </location>
</feature>
<feature type="strand" evidence="15">
    <location>
        <begin position="235"/>
        <end position="237"/>
    </location>
</feature>
<feature type="strand" evidence="15">
    <location>
        <begin position="240"/>
        <end position="243"/>
    </location>
</feature>
<feature type="strand" evidence="15">
    <location>
        <begin position="245"/>
        <end position="247"/>
    </location>
</feature>
<feature type="strand" evidence="15">
    <location>
        <begin position="251"/>
        <end position="257"/>
    </location>
</feature>
<feature type="helix" evidence="15">
    <location>
        <begin position="259"/>
        <end position="262"/>
    </location>
</feature>
<feature type="turn" evidence="15">
    <location>
        <begin position="264"/>
        <end position="266"/>
    </location>
</feature>
<feature type="helix" evidence="15">
    <location>
        <begin position="267"/>
        <end position="279"/>
    </location>
</feature>
<feature type="helix" evidence="15">
    <location>
        <begin position="281"/>
        <end position="286"/>
    </location>
</feature>
<feature type="turn" evidence="15">
    <location>
        <begin position="290"/>
        <end position="295"/>
    </location>
</feature>
<feature type="helix" evidence="15">
    <location>
        <begin position="296"/>
        <end position="298"/>
    </location>
</feature>
<feature type="strand" evidence="15">
    <location>
        <begin position="308"/>
        <end position="310"/>
    </location>
</feature>
<feature type="strand" evidence="15">
    <location>
        <begin position="314"/>
        <end position="317"/>
    </location>
</feature>
<feature type="strand" evidence="15">
    <location>
        <begin position="321"/>
        <end position="325"/>
    </location>
</feature>
<feature type="helix" evidence="15">
    <location>
        <begin position="327"/>
        <end position="332"/>
    </location>
</feature>
<feature type="strand" evidence="15">
    <location>
        <begin position="337"/>
        <end position="339"/>
    </location>
</feature>
<feature type="helix" evidence="15">
    <location>
        <begin position="348"/>
        <end position="359"/>
    </location>
</feature>
<feature type="strand" evidence="15">
    <location>
        <begin position="365"/>
        <end position="367"/>
    </location>
</feature>
<comment type="function">
    <text evidence="1 2 7">Glutamine synthetase that catalyzes the ATP-dependent conversion of glutamate and ammonia to glutamine (PubMed:28323). Its role depends on tissue localization: in the brain, it regulates the levels of toxic ammonia and converts neurotoxic glutamate to harmless glutamine, whereas in the liver, it is one of the enzymes responsible for the removal of ammonia (By similarity). Plays a key role in ammonium detoxification during erythropoiesis: the glutamine synthetase activity is required to remove ammonium generated by porphobilinogen deaminase (HMBS) during heme biosynthesis to prevent ammonium accumulation and oxidative stress (By similarity). Essential for proliferation of fetal skin fibroblasts (By similarity). Independently of its glutamine synthetase activity, required for endothelial cell migration during vascular development (By similarity). Involved in angiogenesis by regulating membrane localization and activation of the GTPase RHOJ, possibly by promoting RHOJ palmitoylation. May act as a palmitoyltransferase for RHOJ: able to autopalmitoylate and then transfer the palmitoyl group to RHOJ. Plays a role in ribosomal 40S subunit biogenesis. Through the interaction with BEST2, inhibits BEST2 channel activity by affecting the gating at the aperture in the absence of intracellular L-glutamate, but sensitizes BEST2 to intracellular L-glutamate, which promotes the opening of BEST2 and thus relieves its inhibitory effect on BEST2 (By similarity).</text>
</comment>
<comment type="catalytic activity">
    <reaction evidence="7">
        <text>L-glutamate + NH4(+) + ATP = L-glutamine + ADP + phosphate + H(+)</text>
        <dbReference type="Rhea" id="RHEA:16169"/>
        <dbReference type="ChEBI" id="CHEBI:15378"/>
        <dbReference type="ChEBI" id="CHEBI:28938"/>
        <dbReference type="ChEBI" id="CHEBI:29985"/>
        <dbReference type="ChEBI" id="CHEBI:30616"/>
        <dbReference type="ChEBI" id="CHEBI:43474"/>
        <dbReference type="ChEBI" id="CHEBI:58359"/>
        <dbReference type="ChEBI" id="CHEBI:456216"/>
        <dbReference type="EC" id="6.3.1.2"/>
    </reaction>
</comment>
<comment type="catalytic activity">
    <reaction evidence="1">
        <text>L-cysteinyl-[protein] + hexadecanoyl-CoA = S-hexadecanoyl-L-cysteinyl-[protein] + CoA</text>
        <dbReference type="Rhea" id="RHEA:36683"/>
        <dbReference type="Rhea" id="RHEA-COMP:10131"/>
        <dbReference type="Rhea" id="RHEA-COMP:11032"/>
        <dbReference type="ChEBI" id="CHEBI:29950"/>
        <dbReference type="ChEBI" id="CHEBI:57287"/>
        <dbReference type="ChEBI" id="CHEBI:57379"/>
        <dbReference type="ChEBI" id="CHEBI:74151"/>
        <dbReference type="EC" id="2.3.1.225"/>
    </reaction>
</comment>
<comment type="cofactor">
    <cofactor evidence="7">
        <name>Mg(2+)</name>
        <dbReference type="ChEBI" id="CHEBI:18420"/>
    </cofactor>
    <cofactor evidence="7">
        <name>Mn(2+)</name>
        <dbReference type="ChEBI" id="CHEBI:29035"/>
    </cofactor>
</comment>
<comment type="activity regulation">
    <text evidence="8">Glutamine synthetase activity is inhibited by methionine sulfoximine (MSO).</text>
</comment>
<comment type="biophysicochemical properties">
    <kinetics>
        <KM evidence="7">5 mM for L-glutamate (with 2 mM of Mn(2+))</KM>
        <KM evidence="7">0.3 mM for L-glutamate (with 8 mM of Mn(2+))</KM>
        <KM evidence="7">1.6 mM for L-glutamate (with 50 mM of Mg(2+))</KM>
        <KM evidence="7">5 mM for L-glutamate (with 10 mM of Mg(2+))</KM>
        <KM evidence="7">0.3 mM for NH(3)</KM>
    </kinetics>
</comment>
<comment type="subunit">
    <text evidence="1 2">Decamer; composed of two pentamers (By similarity). Interacts with PALMD (By similarity). Interacts with RHOJ (By similarity). Interacts with BEST2; this interaction tethers a fraction of GLUL to the membrane, causing a decrease of cytosolic glutamine synthase (GS) activity and inhibits the chloride channel activity of BEST2 by affecting the gating at the aperture in the absence of intracellular glutamate (By similarity).</text>
</comment>
<comment type="subcellular location">
    <subcellularLocation>
        <location evidence="13">Cytoplasm</location>
        <location evidence="13">Cytosol</location>
    </subcellularLocation>
    <subcellularLocation>
        <location evidence="13">Microsome</location>
    </subcellularLocation>
    <subcellularLocation>
        <location evidence="13">Mitochondrion</location>
    </subcellularLocation>
    <subcellularLocation>
        <location evidence="1">Cell membrane</location>
        <topology evidence="1">Lipid-anchor</topology>
    </subcellularLocation>
    <text evidence="1">Mainly localizes in the cytosol, with a fraction associated with the cell membrane.</text>
</comment>
<comment type="tissue specificity">
    <text evidence="9 10">In the adult liver, expression is restricted to a small population of hepatocytes which form only a small rim of one to three hepatocytes around the central veins (PubMed:6138251). Expressed in lung microvascular endothelial cells (PubMed:7638749).</text>
</comment>
<comment type="induction">
    <text evidence="6">By glucocorticoids (PubMed:18555765). Stimulated by the N-methyl-D-aspartate (NMDA) type glutamate receptor antagonist MK801 (PubMed:18555765). Vitamin D and the Wnt signaling pathway inhibit its expression and activity (PubMed:18555765). Down-regulated during osteoblast mineralization (PubMed:18555765).</text>
</comment>
<comment type="PTM">
    <text evidence="1">Palmitoylated; undergoes autopalmitoylation.</text>
</comment>
<comment type="PTM">
    <text evidence="1">Acetylated by EP300/p300; acetylation is stimulated by increased glutamine levels and promotes ubiquitin-mediated proteasomal degradation.</text>
</comment>
<comment type="PTM">
    <text evidence="1 2">Ubiquitinated by ZNRF1 (By similarity). Ubiquitinated by the DCX (DDB1-CUL4-X-box) E3 ubiquitin-protein ligase complex called CRL4(CRBN), leading to proteasomal degradation (By similarity).</text>
</comment>
<comment type="similarity">
    <text evidence="12">Belongs to the glutamine synthetase family.</text>
</comment>
<reference key="1">
    <citation type="journal article" date="1988" name="Nucleic Acids Res.">
        <title>Nucleotide sequence of rat glutamine synthetase mRNA.</title>
        <authorList>
            <person name="van de Zande L."/>
            <person name="Labruyere W."/>
            <person name="Smaling M."/>
            <person name="Moorman A."/>
            <person name="Wilson R.H."/>
            <person name="Charles R."/>
            <person name="Lamers W.H."/>
        </authorList>
    </citation>
    <scope>NUCLEOTIDE SEQUENCE [MRNA]</scope>
    <source>
        <strain>Wistar</strain>
        <tissue>Liver</tissue>
    </source>
</reference>
<reference key="2">
    <citation type="journal article" date="1990" name="Gene">
        <title>Isolation and characterization of the rat glutamine synthetase-encoding gene.</title>
        <authorList>
            <person name="van de Zande L."/>
            <person name="Labruyere W.T."/>
            <person name="Arnberg A.C."/>
            <person name="Wilson R.H."/>
            <person name="van de Bogaert A.J.W."/>
            <person name="Das A.T."/>
            <person name="van Oorschot D.A.J."/>
            <person name="Frijters C."/>
            <person name="Charles R."/>
            <person name="Moorman A.F.M."/>
            <person name="Lamers W.H."/>
        </authorList>
    </citation>
    <scope>NUCLEOTIDE SEQUENCE [GENOMIC DNA / MRNA]</scope>
</reference>
<reference key="3">
    <citation type="journal article" date="1991" name="Brain Res. Mol. Brain Res.">
        <title>Cloning and functional characterization of the rat glutamine synthetase gene.</title>
        <authorList>
            <person name="Mill J.F."/>
            <person name="Mearow K.M."/>
            <person name="Purohit H.J."/>
            <person name="Haleem-Smith H."/>
            <person name="King R."/>
            <person name="Freese E."/>
        </authorList>
    </citation>
    <scope>NUCLEOTIDE SEQUENCE [MRNA]</scope>
</reference>
<reference key="4">
    <citation type="journal article" date="2004" name="Genome Res.">
        <title>The status, quality, and expansion of the NIH full-length cDNA project: the Mammalian Gene Collection (MGC).</title>
        <authorList>
            <consortium name="The MGC Project Team"/>
        </authorList>
    </citation>
    <scope>NUCLEOTIDE SEQUENCE [LARGE SCALE MRNA]</scope>
    <source>
        <strain>Brown Norway</strain>
        <tissue>Heart</tissue>
        <tissue>Pituitary</tissue>
    </source>
</reference>
<reference key="5">
    <citation type="submission" date="2006-11" db="UniProtKB">
        <authorList>
            <person name="Lubec G."/>
            <person name="Afjehi-Sadat L."/>
        </authorList>
    </citation>
    <scope>PROTEIN SEQUENCE OF 15-41; 92-103; 190-213; 299-319 AND 341-357</scope>
    <scope>IDENTIFICATION BY MASS SPECTROMETRY</scope>
    <source>
        <strain>Sprague-Dawley</strain>
        <tissue>Spinal cord</tissue>
    </source>
</reference>
<reference key="6">
    <citation type="journal article" date="1972" name="J. Biol. Chem.">
        <title>Rat liver glutamine synthetase. Preparation, properties, and mechanism of inhibition by carbamyl phosphate.</title>
        <authorList>
            <person name="Tate S.S."/>
            <person name="Leu F.Y."/>
            <person name="Meister A."/>
        </authorList>
    </citation>
    <scope>ACTIVITY REGULATION</scope>
</reference>
<reference key="7">
    <citation type="journal article" date="1978" name="J. Biol. Chem.">
        <title>Glutamine synthetase from rat liver. Purification, properties, and preparation of specific antisera.</title>
        <authorList>
            <person name="Deuel T.F."/>
            <person name="Louie M."/>
            <person name="Lerner A."/>
        </authorList>
    </citation>
    <scope>FUNCTION</scope>
    <scope>CATALYTIC ACTIVITY</scope>
    <scope>BIOPHYSICOCHEMICAL PROPERTIES</scope>
    <scope>SUBCELLULAR LOCATION</scope>
</reference>
<reference key="8">
    <citation type="journal article" date="1983" name="EMBO J.">
        <title>Heterogeneous distribution of glutamine synthetase among rat liver parenchymal cells in situ and in primary culture.</title>
        <authorList>
            <person name="Gebhardt R."/>
            <person name="Mecke D."/>
        </authorList>
    </citation>
    <scope>TISSUE SPECIFICITY</scope>
</reference>
<reference key="9">
    <citation type="journal article" date="1995" name="Surgery">
        <title>Molecular regulation of lung endothelial glutamine synthetase expression.</title>
        <authorList>
            <person name="Abcouwer S.F."/>
            <person name="Lukascewicz G.C."/>
            <person name="Ryan U.S."/>
            <person name="Souba W.W."/>
        </authorList>
    </citation>
    <scope>TISSUE SPECIFICITY</scope>
</reference>
<reference key="10">
    <citation type="journal article" date="2008" name="Bone">
        <title>Wnt and steroid pathways control glutamate signalling by regulating glutamine synthetase activity in osteoblastic cells.</title>
        <authorList>
            <person name="Olkku A."/>
            <person name="Mahonen A."/>
        </authorList>
    </citation>
    <scope>INDUCTION</scope>
</reference>
<name>GLNA_RAT</name>
<gene>
    <name evidence="14" type="primary">Glul</name>
    <name type="synonym">Glns</name>
</gene>
<accession>P09606</accession>
<accession>Q6P7Q9</accession>
<organism>
    <name type="scientific">Rattus norvegicus</name>
    <name type="common">Rat</name>
    <dbReference type="NCBI Taxonomy" id="10116"/>
    <lineage>
        <taxon>Eukaryota</taxon>
        <taxon>Metazoa</taxon>
        <taxon>Chordata</taxon>
        <taxon>Craniata</taxon>
        <taxon>Vertebrata</taxon>
        <taxon>Euteleostomi</taxon>
        <taxon>Mammalia</taxon>
        <taxon>Eutheria</taxon>
        <taxon>Euarchontoglires</taxon>
        <taxon>Glires</taxon>
        <taxon>Rodentia</taxon>
        <taxon>Myomorpha</taxon>
        <taxon>Muroidea</taxon>
        <taxon>Muridae</taxon>
        <taxon>Murinae</taxon>
        <taxon>Rattus</taxon>
    </lineage>
</organism>
<dbReference type="EC" id="6.3.1.2" evidence="7"/>
<dbReference type="EC" id="2.3.1.225" evidence="1"/>
<dbReference type="EMBL" id="X07921">
    <property type="protein sequence ID" value="CAA30754.1"/>
    <property type="molecule type" value="mRNA"/>
</dbReference>
<dbReference type="EMBL" id="M29599">
    <property type="protein sequence ID" value="AAA65096.1"/>
    <property type="molecule type" value="Genomic_DNA"/>
</dbReference>
<dbReference type="EMBL" id="M29595">
    <property type="protein sequence ID" value="AAA65096.1"/>
    <property type="status" value="JOINED"/>
    <property type="molecule type" value="Genomic_DNA"/>
</dbReference>
<dbReference type="EMBL" id="M29596">
    <property type="protein sequence ID" value="AAA65096.1"/>
    <property type="status" value="JOINED"/>
    <property type="molecule type" value="Genomic_DNA"/>
</dbReference>
<dbReference type="EMBL" id="M29597">
    <property type="protein sequence ID" value="AAA65096.1"/>
    <property type="status" value="JOINED"/>
    <property type="molecule type" value="Genomic_DNA"/>
</dbReference>
<dbReference type="EMBL" id="M29598">
    <property type="protein sequence ID" value="AAA65096.1"/>
    <property type="status" value="JOINED"/>
    <property type="molecule type" value="Genomic_DNA"/>
</dbReference>
<dbReference type="EMBL" id="M29579">
    <property type="protein sequence ID" value="AAA65095.1"/>
    <property type="molecule type" value="mRNA"/>
</dbReference>
<dbReference type="EMBL" id="M91652">
    <property type="protein sequence ID" value="AAC42038.1"/>
    <property type="molecule type" value="mRNA"/>
</dbReference>
<dbReference type="EMBL" id="BC061559">
    <property type="protein sequence ID" value="AAH61559.1"/>
    <property type="molecule type" value="mRNA"/>
</dbReference>
<dbReference type="EMBL" id="BC072694">
    <property type="protein sequence ID" value="AAH72694.1"/>
    <property type="molecule type" value="mRNA"/>
</dbReference>
<dbReference type="PIR" id="S01242">
    <property type="entry name" value="AJRTQ"/>
</dbReference>
<dbReference type="RefSeq" id="NP_001380733.1">
    <property type="nucleotide sequence ID" value="NM_001393804.1"/>
</dbReference>
<dbReference type="RefSeq" id="NP_001416624.1">
    <property type="nucleotide sequence ID" value="NM_001429695.1"/>
</dbReference>
<dbReference type="RefSeq" id="NP_001416625.1">
    <property type="nucleotide sequence ID" value="NM_001429696.1"/>
</dbReference>
<dbReference type="RefSeq" id="NP_001416627.1">
    <property type="nucleotide sequence ID" value="NM_001429698.1"/>
</dbReference>
<dbReference type="RefSeq" id="NP_058769.4">
    <property type="nucleotide sequence ID" value="NM_017073.5"/>
</dbReference>
<dbReference type="PDB" id="8XLJ">
    <property type="method" value="EM"/>
    <property type="resolution" value="3.90 A"/>
    <property type="chains" value="A/B/C/D/E/F/G/H/I/J=1-372"/>
</dbReference>
<dbReference type="PDB" id="9C28">
    <property type="method" value="EM"/>
    <property type="resolution" value="3.12 A"/>
    <property type="chains" value="A/B/C/D/E/F/G/H/I/J=1-373"/>
</dbReference>
<dbReference type="PDBsum" id="8XLJ"/>
<dbReference type="PDBsum" id="9C28"/>
<dbReference type="EMDB" id="EMD-38450"/>
<dbReference type="EMDB" id="EMD-45137"/>
<dbReference type="SMR" id="P09606"/>
<dbReference type="BioGRID" id="247058">
    <property type="interactions" value="4"/>
</dbReference>
<dbReference type="FunCoup" id="P09606">
    <property type="interactions" value="2258"/>
</dbReference>
<dbReference type="IntAct" id="P09606">
    <property type="interactions" value="3"/>
</dbReference>
<dbReference type="MINT" id="P09606"/>
<dbReference type="STRING" id="10116.ENSRNOP00000065890"/>
<dbReference type="CarbonylDB" id="P09606"/>
<dbReference type="GlyGen" id="P09606">
    <property type="glycosylation" value="2 sites, 1 O-linked glycan (1 site)"/>
</dbReference>
<dbReference type="iPTMnet" id="P09606"/>
<dbReference type="PhosphoSitePlus" id="P09606"/>
<dbReference type="SwissPalm" id="P09606"/>
<dbReference type="PaxDb" id="10116-ENSRNOP00000065890"/>
<dbReference type="GeneID" id="24957"/>
<dbReference type="KEGG" id="rno:24957"/>
<dbReference type="AGR" id="RGD:2710"/>
<dbReference type="CTD" id="2752"/>
<dbReference type="RGD" id="2710">
    <property type="gene designation" value="Glul"/>
</dbReference>
<dbReference type="VEuPathDB" id="HostDB:ENSRNOG00000049560"/>
<dbReference type="eggNOG" id="KOG0683">
    <property type="taxonomic scope" value="Eukaryota"/>
</dbReference>
<dbReference type="HOGENOM" id="CLU_036762_1_1_1"/>
<dbReference type="InParanoid" id="P09606"/>
<dbReference type="PhylomeDB" id="P09606"/>
<dbReference type="BRENDA" id="6.3.1.2">
    <property type="organism ID" value="5301"/>
</dbReference>
<dbReference type="Reactome" id="R-RNO-210455">
    <property type="pathway name" value="Astrocytic Glutamate-Glutamine Uptake And Metabolism"/>
</dbReference>
<dbReference type="Reactome" id="R-RNO-8964539">
    <property type="pathway name" value="Glutamate and glutamine metabolism"/>
</dbReference>
<dbReference type="PRO" id="PR:P09606"/>
<dbReference type="Proteomes" id="UP000002494">
    <property type="component" value="Chromosome 13"/>
</dbReference>
<dbReference type="Bgee" id="ENSRNOG00000049560">
    <property type="expression patterns" value="Expressed in frontal cortex and 19 other cell types or tissues"/>
</dbReference>
<dbReference type="GO" id="GO:0043679">
    <property type="term" value="C:axon terminus"/>
    <property type="evidence" value="ECO:0000314"/>
    <property type="project" value="RGD"/>
</dbReference>
<dbReference type="GO" id="GO:0044297">
    <property type="term" value="C:cell body"/>
    <property type="evidence" value="ECO:0000266"/>
    <property type="project" value="RGD"/>
</dbReference>
<dbReference type="GO" id="GO:0042995">
    <property type="term" value="C:cell projection"/>
    <property type="evidence" value="ECO:0000314"/>
    <property type="project" value="RGD"/>
</dbReference>
<dbReference type="GO" id="GO:0005737">
    <property type="term" value="C:cytoplasm"/>
    <property type="evidence" value="ECO:0000266"/>
    <property type="project" value="RGD"/>
</dbReference>
<dbReference type="GO" id="GO:0005829">
    <property type="term" value="C:cytosol"/>
    <property type="evidence" value="ECO:0000250"/>
    <property type="project" value="UniProtKB"/>
</dbReference>
<dbReference type="GO" id="GO:0005783">
    <property type="term" value="C:endoplasmic reticulum"/>
    <property type="evidence" value="ECO:0007669"/>
    <property type="project" value="UniProtKB-KW"/>
</dbReference>
<dbReference type="GO" id="GO:0097386">
    <property type="term" value="C:glial cell projection"/>
    <property type="evidence" value="ECO:0000266"/>
    <property type="project" value="RGD"/>
</dbReference>
<dbReference type="GO" id="GO:0005739">
    <property type="term" value="C:mitochondrion"/>
    <property type="evidence" value="ECO:0007669"/>
    <property type="project" value="UniProtKB-SubCell"/>
</dbReference>
<dbReference type="GO" id="GO:0043209">
    <property type="term" value="C:myelin sheath"/>
    <property type="evidence" value="ECO:0000314"/>
    <property type="project" value="UniProtKB"/>
</dbReference>
<dbReference type="GO" id="GO:0043204">
    <property type="term" value="C:perikaryon"/>
    <property type="evidence" value="ECO:0000314"/>
    <property type="project" value="RGD"/>
</dbReference>
<dbReference type="GO" id="GO:0005886">
    <property type="term" value="C:plasma membrane"/>
    <property type="evidence" value="ECO:0000250"/>
    <property type="project" value="UniProtKB"/>
</dbReference>
<dbReference type="GO" id="GO:0032991">
    <property type="term" value="C:protein-containing complex"/>
    <property type="evidence" value="ECO:0000314"/>
    <property type="project" value="RGD"/>
</dbReference>
<dbReference type="GO" id="GO:0005524">
    <property type="term" value="F:ATP binding"/>
    <property type="evidence" value="ECO:0000314"/>
    <property type="project" value="RGD"/>
</dbReference>
<dbReference type="GO" id="GO:0045503">
    <property type="term" value="F:dynein light chain binding"/>
    <property type="evidence" value="ECO:0000353"/>
    <property type="project" value="RGD"/>
</dbReference>
<dbReference type="GO" id="GO:0016595">
    <property type="term" value="F:glutamate binding"/>
    <property type="evidence" value="ECO:0000314"/>
    <property type="project" value="RGD"/>
</dbReference>
<dbReference type="GO" id="GO:0004356">
    <property type="term" value="F:glutamine synthetase activity"/>
    <property type="evidence" value="ECO:0000314"/>
    <property type="project" value="RGD"/>
</dbReference>
<dbReference type="GO" id="GO:0042802">
    <property type="term" value="F:identical protein binding"/>
    <property type="evidence" value="ECO:0000353"/>
    <property type="project" value="RGD"/>
</dbReference>
<dbReference type="GO" id="GO:0000287">
    <property type="term" value="F:magnesium ion binding"/>
    <property type="evidence" value="ECO:0000314"/>
    <property type="project" value="RGD"/>
</dbReference>
<dbReference type="GO" id="GO:0030145">
    <property type="term" value="F:manganese ion binding"/>
    <property type="evidence" value="ECO:0000314"/>
    <property type="project" value="RGD"/>
</dbReference>
<dbReference type="GO" id="GO:0016151">
    <property type="term" value="F:nickel cation binding"/>
    <property type="evidence" value="ECO:0000314"/>
    <property type="project" value="RGD"/>
</dbReference>
<dbReference type="GO" id="GO:0019706">
    <property type="term" value="F:protein-cysteine S-palmitoyltransferase activity"/>
    <property type="evidence" value="ECO:0000250"/>
    <property type="project" value="UniProtKB"/>
</dbReference>
<dbReference type="GO" id="GO:0019676">
    <property type="term" value="P:ammonia assimilation cycle"/>
    <property type="evidence" value="ECO:0000314"/>
    <property type="project" value="RGD"/>
</dbReference>
<dbReference type="GO" id="GO:0001525">
    <property type="term" value="P:angiogenesis"/>
    <property type="evidence" value="ECO:0007669"/>
    <property type="project" value="UniProtKB-KW"/>
</dbReference>
<dbReference type="GO" id="GO:0008283">
    <property type="term" value="P:cell population proliferation"/>
    <property type="evidence" value="ECO:0000266"/>
    <property type="project" value="RGD"/>
</dbReference>
<dbReference type="GO" id="GO:0009267">
    <property type="term" value="P:cellular response to starvation"/>
    <property type="evidence" value="ECO:0000266"/>
    <property type="project" value="RGD"/>
</dbReference>
<dbReference type="GO" id="GO:0006536">
    <property type="term" value="P:glutamate metabolic process"/>
    <property type="evidence" value="ECO:0000314"/>
    <property type="project" value="RGD"/>
</dbReference>
<dbReference type="GO" id="GO:0006542">
    <property type="term" value="P:glutamine biosynthetic process"/>
    <property type="evidence" value="ECO:0000314"/>
    <property type="project" value="RGD"/>
</dbReference>
<dbReference type="GO" id="GO:0097275">
    <property type="term" value="P:intracellular ammonium homeostasis"/>
    <property type="evidence" value="ECO:0000250"/>
    <property type="project" value="UniProtKB"/>
</dbReference>
<dbReference type="GO" id="GO:0050679">
    <property type="term" value="P:positive regulation of epithelial cell proliferation"/>
    <property type="evidence" value="ECO:0000315"/>
    <property type="project" value="RGD"/>
</dbReference>
<dbReference type="GO" id="GO:0045648">
    <property type="term" value="P:positive regulation of erythrocyte differentiation"/>
    <property type="evidence" value="ECO:0000250"/>
    <property type="project" value="UniProtKB"/>
</dbReference>
<dbReference type="GO" id="GO:0032024">
    <property type="term" value="P:positive regulation of insulin secretion"/>
    <property type="evidence" value="ECO:0000315"/>
    <property type="project" value="RGD"/>
</dbReference>
<dbReference type="GO" id="GO:0051968">
    <property type="term" value="P:positive regulation of synaptic transmission, glutamatergic"/>
    <property type="evidence" value="ECO:0000315"/>
    <property type="project" value="RGD"/>
</dbReference>
<dbReference type="GO" id="GO:0018345">
    <property type="term" value="P:protein palmitoylation"/>
    <property type="evidence" value="ECO:0000250"/>
    <property type="project" value="UniProtKB"/>
</dbReference>
<dbReference type="GO" id="GO:0010594">
    <property type="term" value="P:regulation of endothelial cell migration"/>
    <property type="evidence" value="ECO:0000250"/>
    <property type="project" value="UniProtKB"/>
</dbReference>
<dbReference type="GO" id="GO:1904749">
    <property type="term" value="P:regulation of protein localization to nucleolus"/>
    <property type="evidence" value="ECO:0000266"/>
    <property type="project" value="RGD"/>
</dbReference>
<dbReference type="GO" id="GO:1903670">
    <property type="term" value="P:regulation of sprouting angiogenesis"/>
    <property type="evidence" value="ECO:0000250"/>
    <property type="project" value="UniProtKB"/>
</dbReference>
<dbReference type="GO" id="GO:0009749">
    <property type="term" value="P:response to glucose"/>
    <property type="evidence" value="ECO:0000266"/>
    <property type="project" value="RGD"/>
</dbReference>
<dbReference type="GO" id="GO:0042254">
    <property type="term" value="P:ribosome biogenesis"/>
    <property type="evidence" value="ECO:0000266"/>
    <property type="project" value="RGD"/>
</dbReference>
<dbReference type="FunFam" id="3.10.20.70:FF:000004">
    <property type="entry name" value="Glutamine synthetase"/>
    <property type="match status" value="1"/>
</dbReference>
<dbReference type="FunFam" id="3.30.590.10:FF:000011">
    <property type="entry name" value="Glutamine synthetase"/>
    <property type="match status" value="1"/>
</dbReference>
<dbReference type="Gene3D" id="3.10.20.70">
    <property type="entry name" value="Glutamine synthetase, N-terminal domain"/>
    <property type="match status" value="1"/>
</dbReference>
<dbReference type="Gene3D" id="3.30.590.10">
    <property type="entry name" value="Glutamine synthetase/guanido kinase, catalytic domain"/>
    <property type="match status" value="2"/>
</dbReference>
<dbReference type="InterPro" id="IPR008147">
    <property type="entry name" value="Gln_synt_N"/>
</dbReference>
<dbReference type="InterPro" id="IPR036651">
    <property type="entry name" value="Gln_synt_N_sf"/>
</dbReference>
<dbReference type="InterPro" id="IPR014746">
    <property type="entry name" value="Gln_synth/guanido_kin_cat_dom"/>
</dbReference>
<dbReference type="InterPro" id="IPR008146">
    <property type="entry name" value="Gln_synth_cat_dom"/>
</dbReference>
<dbReference type="InterPro" id="IPR027303">
    <property type="entry name" value="Gln_synth_gly_rich_site"/>
</dbReference>
<dbReference type="InterPro" id="IPR027302">
    <property type="entry name" value="Gln_synth_N_conserv_site"/>
</dbReference>
<dbReference type="InterPro" id="IPR050292">
    <property type="entry name" value="Glutamine_Synthetase"/>
</dbReference>
<dbReference type="PANTHER" id="PTHR20852">
    <property type="entry name" value="GLUTAMINE SYNTHETASE"/>
    <property type="match status" value="1"/>
</dbReference>
<dbReference type="PANTHER" id="PTHR20852:SF45">
    <property type="entry name" value="GLUTAMINE SYNTHETASE"/>
    <property type="match status" value="1"/>
</dbReference>
<dbReference type="Pfam" id="PF00120">
    <property type="entry name" value="Gln-synt_C"/>
    <property type="match status" value="1"/>
</dbReference>
<dbReference type="Pfam" id="PF03951">
    <property type="entry name" value="Gln-synt_N"/>
    <property type="match status" value="1"/>
</dbReference>
<dbReference type="SMART" id="SM01230">
    <property type="entry name" value="Gln-synt_C"/>
    <property type="match status" value="1"/>
</dbReference>
<dbReference type="SUPFAM" id="SSF54368">
    <property type="entry name" value="Glutamine synthetase, N-terminal domain"/>
    <property type="match status" value="1"/>
</dbReference>
<dbReference type="SUPFAM" id="SSF55931">
    <property type="entry name" value="Glutamine synthetase/guanido kinase"/>
    <property type="match status" value="1"/>
</dbReference>
<dbReference type="PROSITE" id="PS00180">
    <property type="entry name" value="GLNA_1"/>
    <property type="match status" value="1"/>
</dbReference>
<dbReference type="PROSITE" id="PS00181">
    <property type="entry name" value="GLNA_ATP"/>
    <property type="match status" value="1"/>
</dbReference>
<dbReference type="PROSITE" id="PS51986">
    <property type="entry name" value="GS_BETA_GRASP"/>
    <property type="match status" value="1"/>
</dbReference>
<dbReference type="PROSITE" id="PS51987">
    <property type="entry name" value="GS_CATALYTIC"/>
    <property type="match status" value="1"/>
</dbReference>
<evidence type="ECO:0000250" key="1">
    <source>
        <dbReference type="UniProtKB" id="P15104"/>
    </source>
</evidence>
<evidence type="ECO:0000250" key="2">
    <source>
        <dbReference type="UniProtKB" id="P15105"/>
    </source>
</evidence>
<evidence type="ECO:0000250" key="3">
    <source>
        <dbReference type="UniProtKB" id="P9WN39"/>
    </source>
</evidence>
<evidence type="ECO:0000255" key="4">
    <source>
        <dbReference type="PROSITE-ProRule" id="PRU01330"/>
    </source>
</evidence>
<evidence type="ECO:0000255" key="5">
    <source>
        <dbReference type="PROSITE-ProRule" id="PRU01331"/>
    </source>
</evidence>
<evidence type="ECO:0000269" key="6">
    <source>
    </source>
</evidence>
<evidence type="ECO:0000269" key="7">
    <source>
    </source>
</evidence>
<evidence type="ECO:0000269" key="8">
    <source>
    </source>
</evidence>
<evidence type="ECO:0000269" key="9">
    <source>
    </source>
</evidence>
<evidence type="ECO:0000269" key="10">
    <source>
    </source>
</evidence>
<evidence type="ECO:0000303" key="11">
    <source>
    </source>
</evidence>
<evidence type="ECO:0000305" key="12"/>
<evidence type="ECO:0000305" key="13">
    <source>
    </source>
</evidence>
<evidence type="ECO:0000312" key="14">
    <source>
        <dbReference type="RGD" id="2710"/>
    </source>
</evidence>
<evidence type="ECO:0007829" key="15">
    <source>
        <dbReference type="PDB" id="9C28"/>
    </source>
</evidence>
<protein>
    <recommendedName>
        <fullName evidence="11">Glutamine synthetase</fullName>
        <shortName evidence="11">GS</shortName>
        <ecNumber evidence="7">6.3.1.2</ecNumber>
    </recommendedName>
    <alternativeName>
        <fullName evidence="12">Glutamate--ammonia ligase</fullName>
    </alternativeName>
    <alternativeName>
        <fullName evidence="12">Palmitoyltransferase GLUL</fullName>
        <ecNumber evidence="1">2.3.1.225</ecNumber>
    </alternativeName>
</protein>